<sequence>MNTIWIAVGALTLLGLVFGAILGYASRRFAVEDDPVVEKIDAILPQSQCGQCGYPGCRPYAEAVGLQGEKINRCAPGGEAVMLKIAELLNVEPQPCDGEEQQAAPVRMLAVIDENNCIGCTKCIQACPVDAIVGATRAMHTVMSDLCTGCNLCVDPCPTHCIELRPVNETPDSWKWDLNTIPVRIIPVEQHA</sequence>
<keyword id="KW-0004">4Fe-4S</keyword>
<keyword id="KW-0997">Cell inner membrane</keyword>
<keyword id="KW-1003">Cell membrane</keyword>
<keyword id="KW-0249">Electron transport</keyword>
<keyword id="KW-0408">Iron</keyword>
<keyword id="KW-0411">Iron-sulfur</keyword>
<keyword id="KW-0472">Membrane</keyword>
<keyword id="KW-0479">Metal-binding</keyword>
<keyword id="KW-0677">Repeat</keyword>
<keyword id="KW-1278">Translocase</keyword>
<keyword id="KW-0813">Transport</keyword>
<protein>
    <recommendedName>
        <fullName evidence="1">Ion-translocating oxidoreductase complex subunit B</fullName>
        <ecNumber evidence="1">7.-.-.-</ecNumber>
    </recommendedName>
    <alternativeName>
        <fullName evidence="1">Rsx electron transport complex subunit B</fullName>
    </alternativeName>
</protein>
<feature type="chain" id="PRO_1000194492" description="Ion-translocating oxidoreductase complex subunit B">
    <location>
        <begin position="1"/>
        <end position="192"/>
    </location>
</feature>
<feature type="domain" description="4Fe-4S" evidence="1">
    <location>
        <begin position="32"/>
        <end position="91"/>
    </location>
</feature>
<feature type="domain" description="4Fe-4S ferredoxin-type 1" evidence="1">
    <location>
        <begin position="108"/>
        <end position="137"/>
    </location>
</feature>
<feature type="domain" description="4Fe-4S ferredoxin-type 2" evidence="1">
    <location>
        <begin position="138"/>
        <end position="167"/>
    </location>
</feature>
<feature type="region of interest" description="Hydrophobic" evidence="1">
    <location>
        <begin position="1"/>
        <end position="26"/>
    </location>
</feature>
<feature type="binding site" evidence="1">
    <location>
        <position position="49"/>
    </location>
    <ligand>
        <name>[4Fe-4S] cluster</name>
        <dbReference type="ChEBI" id="CHEBI:49883"/>
        <label>1</label>
    </ligand>
</feature>
<feature type="binding site" evidence="1">
    <location>
        <position position="52"/>
    </location>
    <ligand>
        <name>[4Fe-4S] cluster</name>
        <dbReference type="ChEBI" id="CHEBI:49883"/>
        <label>1</label>
    </ligand>
</feature>
<feature type="binding site" evidence="1">
    <location>
        <position position="57"/>
    </location>
    <ligand>
        <name>[4Fe-4S] cluster</name>
        <dbReference type="ChEBI" id="CHEBI:49883"/>
        <label>1</label>
    </ligand>
</feature>
<feature type="binding site" evidence="1">
    <location>
        <position position="74"/>
    </location>
    <ligand>
        <name>[4Fe-4S] cluster</name>
        <dbReference type="ChEBI" id="CHEBI:49883"/>
        <label>1</label>
    </ligand>
</feature>
<feature type="binding site" evidence="1">
    <location>
        <position position="117"/>
    </location>
    <ligand>
        <name>[4Fe-4S] cluster</name>
        <dbReference type="ChEBI" id="CHEBI:49883"/>
        <label>2</label>
    </ligand>
</feature>
<feature type="binding site" evidence="1">
    <location>
        <position position="120"/>
    </location>
    <ligand>
        <name>[4Fe-4S] cluster</name>
        <dbReference type="ChEBI" id="CHEBI:49883"/>
        <label>2</label>
    </ligand>
</feature>
<feature type="binding site" evidence="1">
    <location>
        <position position="123"/>
    </location>
    <ligand>
        <name>[4Fe-4S] cluster</name>
        <dbReference type="ChEBI" id="CHEBI:49883"/>
        <label>2</label>
    </ligand>
</feature>
<feature type="binding site" evidence="1">
    <location>
        <position position="127"/>
    </location>
    <ligand>
        <name>[4Fe-4S] cluster</name>
        <dbReference type="ChEBI" id="CHEBI:49883"/>
        <label>3</label>
    </ligand>
</feature>
<feature type="binding site" evidence="1">
    <location>
        <position position="147"/>
    </location>
    <ligand>
        <name>[4Fe-4S] cluster</name>
        <dbReference type="ChEBI" id="CHEBI:49883"/>
        <label>3</label>
    </ligand>
</feature>
<feature type="binding site" evidence="1">
    <location>
        <position position="150"/>
    </location>
    <ligand>
        <name>[4Fe-4S] cluster</name>
        <dbReference type="ChEBI" id="CHEBI:49883"/>
        <label>3</label>
    </ligand>
</feature>
<feature type="binding site" evidence="1">
    <location>
        <position position="153"/>
    </location>
    <ligand>
        <name>[4Fe-4S] cluster</name>
        <dbReference type="ChEBI" id="CHEBI:49883"/>
        <label>3</label>
    </ligand>
</feature>
<feature type="binding site" evidence="1">
    <location>
        <position position="157"/>
    </location>
    <ligand>
        <name>[4Fe-4S] cluster</name>
        <dbReference type="ChEBI" id="CHEBI:49883"/>
        <label>2</label>
    </ligand>
</feature>
<name>RSXB_SALDC</name>
<gene>
    <name evidence="1" type="primary">rsxB</name>
    <name type="synonym">rnfB</name>
    <name type="ordered locus">SeD_A1884</name>
</gene>
<reference key="1">
    <citation type="journal article" date="2011" name="J. Bacteriol.">
        <title>Comparative genomics of 28 Salmonella enterica isolates: evidence for CRISPR-mediated adaptive sublineage evolution.</title>
        <authorList>
            <person name="Fricke W.F."/>
            <person name="Mammel M.K."/>
            <person name="McDermott P.F."/>
            <person name="Tartera C."/>
            <person name="White D.G."/>
            <person name="Leclerc J.E."/>
            <person name="Ravel J."/>
            <person name="Cebula T.A."/>
        </authorList>
    </citation>
    <scope>NUCLEOTIDE SEQUENCE [LARGE SCALE GENOMIC DNA]</scope>
    <source>
        <strain>CT_02021853</strain>
    </source>
</reference>
<evidence type="ECO:0000255" key="1">
    <source>
        <dbReference type="HAMAP-Rule" id="MF_00463"/>
    </source>
</evidence>
<accession>B5FIE6</accession>
<proteinExistence type="inferred from homology"/>
<comment type="function">
    <text evidence="1">Part of a membrane-bound complex that couples electron transfer with translocation of ions across the membrane. Required to maintain the reduced state of SoxR.</text>
</comment>
<comment type="cofactor">
    <cofactor evidence="1">
        <name>[4Fe-4S] cluster</name>
        <dbReference type="ChEBI" id="CHEBI:49883"/>
    </cofactor>
    <text evidence="1">Binds 3 [4Fe-4S] clusters.</text>
</comment>
<comment type="subunit">
    <text evidence="1">The complex is composed of six subunits: RsxA, RsxB, RsxC, RsxD, RsxE and RsxG.</text>
</comment>
<comment type="subcellular location">
    <subcellularLocation>
        <location evidence="1">Cell inner membrane</location>
    </subcellularLocation>
</comment>
<comment type="similarity">
    <text evidence="1">Belongs to the 4Fe4S bacterial-type ferredoxin family. RnfB subfamily.</text>
</comment>
<organism>
    <name type="scientific">Salmonella dublin (strain CT_02021853)</name>
    <dbReference type="NCBI Taxonomy" id="439851"/>
    <lineage>
        <taxon>Bacteria</taxon>
        <taxon>Pseudomonadati</taxon>
        <taxon>Pseudomonadota</taxon>
        <taxon>Gammaproteobacteria</taxon>
        <taxon>Enterobacterales</taxon>
        <taxon>Enterobacteriaceae</taxon>
        <taxon>Salmonella</taxon>
    </lineage>
</organism>
<dbReference type="EC" id="7.-.-.-" evidence="1"/>
<dbReference type="EMBL" id="CP001144">
    <property type="protein sequence ID" value="ACH76214.1"/>
    <property type="molecule type" value="Genomic_DNA"/>
</dbReference>
<dbReference type="RefSeq" id="WP_001092597.1">
    <property type="nucleotide sequence ID" value="NC_011205.1"/>
</dbReference>
<dbReference type="SMR" id="B5FIE6"/>
<dbReference type="KEGG" id="sed:SeD_A1884"/>
<dbReference type="HOGENOM" id="CLU_063448_2_0_6"/>
<dbReference type="Proteomes" id="UP000008322">
    <property type="component" value="Chromosome"/>
</dbReference>
<dbReference type="GO" id="GO:0005886">
    <property type="term" value="C:plasma membrane"/>
    <property type="evidence" value="ECO:0007669"/>
    <property type="project" value="UniProtKB-SubCell"/>
</dbReference>
<dbReference type="GO" id="GO:0051539">
    <property type="term" value="F:4 iron, 4 sulfur cluster binding"/>
    <property type="evidence" value="ECO:0007669"/>
    <property type="project" value="UniProtKB-UniRule"/>
</dbReference>
<dbReference type="GO" id="GO:0009055">
    <property type="term" value="F:electron transfer activity"/>
    <property type="evidence" value="ECO:0007669"/>
    <property type="project" value="InterPro"/>
</dbReference>
<dbReference type="GO" id="GO:0046872">
    <property type="term" value="F:metal ion binding"/>
    <property type="evidence" value="ECO:0007669"/>
    <property type="project" value="UniProtKB-KW"/>
</dbReference>
<dbReference type="GO" id="GO:0022900">
    <property type="term" value="P:electron transport chain"/>
    <property type="evidence" value="ECO:0007669"/>
    <property type="project" value="UniProtKB-UniRule"/>
</dbReference>
<dbReference type="FunFam" id="1.10.15.40:FF:000001">
    <property type="entry name" value="Ion-translocating oxidoreductase complex subunit B"/>
    <property type="match status" value="1"/>
</dbReference>
<dbReference type="Gene3D" id="3.30.70.20">
    <property type="match status" value="1"/>
</dbReference>
<dbReference type="Gene3D" id="1.10.15.40">
    <property type="entry name" value="Electron transport complex subunit B, putative Fe-S cluster"/>
    <property type="match status" value="1"/>
</dbReference>
<dbReference type="HAMAP" id="MF_00463">
    <property type="entry name" value="RsxB_RnfB"/>
    <property type="match status" value="1"/>
</dbReference>
<dbReference type="InterPro" id="IPR007202">
    <property type="entry name" value="4Fe-4S_dom"/>
</dbReference>
<dbReference type="InterPro" id="IPR017896">
    <property type="entry name" value="4Fe4S_Fe-S-bd"/>
</dbReference>
<dbReference type="InterPro" id="IPR017900">
    <property type="entry name" value="4Fe4S_Fe_S_CS"/>
</dbReference>
<dbReference type="InterPro" id="IPR050395">
    <property type="entry name" value="4Fe4S_Ferredoxin_RnfB"/>
</dbReference>
<dbReference type="InterPro" id="IPR010207">
    <property type="entry name" value="Elect_transpt_cplx_RnfB/RsxB"/>
</dbReference>
<dbReference type="InterPro" id="IPR016463">
    <property type="entry name" value="RnfB/RsxB_Proteobac"/>
</dbReference>
<dbReference type="NCBIfam" id="NF003475">
    <property type="entry name" value="PRK05113.1"/>
    <property type="match status" value="1"/>
</dbReference>
<dbReference type="NCBIfam" id="TIGR01944">
    <property type="entry name" value="rnfB"/>
    <property type="match status" value="1"/>
</dbReference>
<dbReference type="PANTHER" id="PTHR43560">
    <property type="entry name" value="ION-TRANSLOCATING OXIDOREDUCTASE COMPLEX SUBUNIT B"/>
    <property type="match status" value="1"/>
</dbReference>
<dbReference type="PANTHER" id="PTHR43560:SF1">
    <property type="entry name" value="ION-TRANSLOCATING OXIDOREDUCTASE COMPLEX SUBUNIT B"/>
    <property type="match status" value="1"/>
</dbReference>
<dbReference type="Pfam" id="PF14697">
    <property type="entry name" value="Fer4_21"/>
    <property type="match status" value="1"/>
</dbReference>
<dbReference type="Pfam" id="PF04060">
    <property type="entry name" value="FeS"/>
    <property type="match status" value="1"/>
</dbReference>
<dbReference type="PIRSF" id="PIRSF005784">
    <property type="entry name" value="Elect_transpt_RnfB"/>
    <property type="match status" value="1"/>
</dbReference>
<dbReference type="SUPFAM" id="SSF54862">
    <property type="entry name" value="4Fe-4S ferredoxins"/>
    <property type="match status" value="1"/>
</dbReference>
<dbReference type="PROSITE" id="PS51656">
    <property type="entry name" value="4FE4S"/>
    <property type="match status" value="1"/>
</dbReference>
<dbReference type="PROSITE" id="PS00198">
    <property type="entry name" value="4FE4S_FER_1"/>
    <property type="match status" value="2"/>
</dbReference>
<dbReference type="PROSITE" id="PS51379">
    <property type="entry name" value="4FE4S_FER_2"/>
    <property type="match status" value="2"/>
</dbReference>